<name>NLPA_ECOLI</name>
<keyword id="KW-0997">Cell inner membrane</keyword>
<keyword id="KW-1003">Cell membrane</keyword>
<keyword id="KW-0449">Lipoprotein</keyword>
<keyword id="KW-0472">Membrane</keyword>
<keyword id="KW-0564">Palmitate</keyword>
<keyword id="KW-1185">Reference proteome</keyword>
<keyword id="KW-0732">Signal</keyword>
<organism>
    <name type="scientific">Escherichia coli (strain K12)</name>
    <dbReference type="NCBI Taxonomy" id="83333"/>
    <lineage>
        <taxon>Bacteria</taxon>
        <taxon>Pseudomonadati</taxon>
        <taxon>Pseudomonadota</taxon>
        <taxon>Gammaproteobacteria</taxon>
        <taxon>Enterobacterales</taxon>
        <taxon>Enterobacteriaceae</taxon>
        <taxon>Escherichia</taxon>
    </lineage>
</organism>
<accession>P04846</accession>
<accession>Q2M7X3</accession>
<evidence type="ECO:0000255" key="1">
    <source>
        <dbReference type="PROSITE-ProRule" id="PRU00303"/>
    </source>
</evidence>
<evidence type="ECO:0000269" key="2">
    <source>
    </source>
</evidence>
<evidence type="ECO:0000305" key="3"/>
<feature type="signal peptide">
    <location>
        <begin position="1"/>
        <end position="23"/>
    </location>
</feature>
<feature type="chain" id="PRO_0000019737" description="Lipoprotein 28">
    <location>
        <begin position="24"/>
        <end position="272"/>
    </location>
</feature>
<feature type="lipid moiety-binding region" description="N-palmitoyl cysteine" evidence="3">
    <location>
        <position position="24"/>
    </location>
</feature>
<feature type="lipid moiety-binding region" description="S-diacylglycerol cysteine" evidence="1 2">
    <location>
        <position position="24"/>
    </location>
</feature>
<reference key="1">
    <citation type="journal article" date="1986" name="J. Biol. Chem.">
        <title>Lipoprotein-28, a cytoplasmic membrane lipoprotein from Escherichia coli. Cloning, DNA sequence, and expression of its gene.</title>
        <authorList>
            <person name="Yu F."/>
            <person name="Inouye S."/>
            <person name="Inouye M."/>
        </authorList>
    </citation>
    <scope>NUCLEOTIDE SEQUENCE [GENOMIC DNA]</scope>
    <scope>DIACYLGLYCEROL AT CYS-24</scope>
</reference>
<reference key="2">
    <citation type="journal article" date="1993" name="Genomics">
        <title>DNA sequence and analysis of 136 kilobases of the Escherichia coli genome: organizational symmetry around the origin of replication.</title>
        <authorList>
            <person name="Burland V.D."/>
            <person name="Plunkett G. III"/>
            <person name="Daniels D.L."/>
            <person name="Blattner F.R."/>
        </authorList>
    </citation>
    <scope>NUCLEOTIDE SEQUENCE [LARGE SCALE GENOMIC DNA]</scope>
    <source>
        <strain>K12 / MG1655 / ATCC 47076</strain>
    </source>
</reference>
<reference key="3">
    <citation type="journal article" date="1997" name="Science">
        <title>The complete genome sequence of Escherichia coli K-12.</title>
        <authorList>
            <person name="Blattner F.R."/>
            <person name="Plunkett G. III"/>
            <person name="Bloch C.A."/>
            <person name="Perna N.T."/>
            <person name="Burland V."/>
            <person name="Riley M."/>
            <person name="Collado-Vides J."/>
            <person name="Glasner J.D."/>
            <person name="Rode C.K."/>
            <person name="Mayhew G.F."/>
            <person name="Gregor J."/>
            <person name="Davis N.W."/>
            <person name="Kirkpatrick H.A."/>
            <person name="Goeden M.A."/>
            <person name="Rose D.J."/>
            <person name="Mau B."/>
            <person name="Shao Y."/>
        </authorList>
    </citation>
    <scope>NUCLEOTIDE SEQUENCE [LARGE SCALE GENOMIC DNA]</scope>
    <source>
        <strain>K12 / MG1655 / ATCC 47076</strain>
    </source>
</reference>
<reference key="4">
    <citation type="journal article" date="2006" name="Mol. Syst. Biol.">
        <title>Highly accurate genome sequences of Escherichia coli K-12 strains MG1655 and W3110.</title>
        <authorList>
            <person name="Hayashi K."/>
            <person name="Morooka N."/>
            <person name="Yamamoto Y."/>
            <person name="Fujita K."/>
            <person name="Isono K."/>
            <person name="Choi S."/>
            <person name="Ohtsubo E."/>
            <person name="Baba T."/>
            <person name="Wanner B.L."/>
            <person name="Mori H."/>
            <person name="Horiuchi T."/>
        </authorList>
    </citation>
    <scope>NUCLEOTIDE SEQUENCE [LARGE SCALE GENOMIC DNA]</scope>
    <source>
        <strain>K12 / W3110 / ATCC 27325 / DSM 5911</strain>
    </source>
</reference>
<proteinExistence type="evidence at protein level"/>
<sequence>MKLTTHHLRTGAALLLAGILLAGCDQSSSDAKHIKVGVINGAEQDVAEVAKKVAKEKYGLDVELVGFSGSLLPNDATNHGELDANVFQHRPFLEQDNQAHGYKLVAVGNTFVFPMAGYSKKIKTVAQIKEGATVAIPNDPTNLGRALLLLQKEKLITLKEGKGLLPTALDITDNPRHLQIMELEGAQLPRVLDDPKVDVAIISTTYIQQTGLSPVHDSVFIEDKNSPYVNILVAREDNKNAENVKEFLQSYQSPEVAKAAETIFNGGAVPGW</sequence>
<gene>
    <name type="primary">nlpA</name>
    <name type="ordered locus">b3661</name>
    <name type="ordered locus">JW3635</name>
</gene>
<comment type="subcellular location">
    <subcellularLocation>
        <location>Cell inner membrane</location>
        <topology>Lipid-anchor</topology>
    </subcellularLocation>
</comment>
<comment type="similarity">
    <text evidence="3">Belongs to the NlpA lipoprotein family.</text>
</comment>
<protein>
    <recommendedName>
        <fullName>Lipoprotein 28</fullName>
    </recommendedName>
</protein>
<dbReference type="EMBL" id="M12163">
    <property type="protein sequence ID" value="AAA24080.1"/>
    <property type="molecule type" value="Genomic_DNA"/>
</dbReference>
<dbReference type="EMBL" id="L10328">
    <property type="protein sequence ID" value="AAA62013.1"/>
    <property type="molecule type" value="Genomic_DNA"/>
</dbReference>
<dbReference type="EMBL" id="U00096">
    <property type="protein sequence ID" value="AAC76684.1"/>
    <property type="molecule type" value="Genomic_DNA"/>
</dbReference>
<dbReference type="EMBL" id="AP009048">
    <property type="protein sequence ID" value="BAE77633.1"/>
    <property type="molecule type" value="Genomic_DNA"/>
</dbReference>
<dbReference type="PIR" id="A26286">
    <property type="entry name" value="LPEC28"/>
</dbReference>
<dbReference type="RefSeq" id="NP_418117.1">
    <property type="nucleotide sequence ID" value="NC_000913.3"/>
</dbReference>
<dbReference type="RefSeq" id="WP_000779426.1">
    <property type="nucleotide sequence ID" value="NZ_SSZK01000043.1"/>
</dbReference>
<dbReference type="SMR" id="P04846"/>
<dbReference type="BioGRID" id="4259626">
    <property type="interactions" value="20"/>
</dbReference>
<dbReference type="BioGRID" id="852481">
    <property type="interactions" value="1"/>
</dbReference>
<dbReference type="FunCoup" id="P04846">
    <property type="interactions" value="237"/>
</dbReference>
<dbReference type="IntAct" id="P04846">
    <property type="interactions" value="8"/>
</dbReference>
<dbReference type="STRING" id="511145.b3661"/>
<dbReference type="jPOST" id="P04846"/>
<dbReference type="PaxDb" id="511145-b3661"/>
<dbReference type="EnsemblBacteria" id="AAC76684">
    <property type="protein sequence ID" value="AAC76684"/>
    <property type="gene ID" value="b3661"/>
</dbReference>
<dbReference type="GeneID" id="948175"/>
<dbReference type="KEGG" id="ecj:JW3635"/>
<dbReference type="KEGG" id="eco:b3661"/>
<dbReference type="KEGG" id="ecoc:C3026_19835"/>
<dbReference type="PATRIC" id="fig|1411691.4.peg.3045"/>
<dbReference type="EchoBASE" id="EB0651"/>
<dbReference type="eggNOG" id="COG1464">
    <property type="taxonomic scope" value="Bacteria"/>
</dbReference>
<dbReference type="HOGENOM" id="CLU_067080_0_0_6"/>
<dbReference type="InParanoid" id="P04846"/>
<dbReference type="OMA" id="QDNKAHN"/>
<dbReference type="OrthoDB" id="9812878at2"/>
<dbReference type="PhylomeDB" id="P04846"/>
<dbReference type="BioCyc" id="EcoCyc:EG10657-MONOMER"/>
<dbReference type="PRO" id="PR:P04846"/>
<dbReference type="Proteomes" id="UP000000625">
    <property type="component" value="Chromosome"/>
</dbReference>
<dbReference type="GO" id="GO:0005886">
    <property type="term" value="C:plasma membrane"/>
    <property type="evidence" value="ECO:0000314"/>
    <property type="project" value="EcoCyc"/>
</dbReference>
<dbReference type="GO" id="GO:0048473">
    <property type="term" value="P:D-methionine transmembrane transport"/>
    <property type="evidence" value="ECO:0000318"/>
    <property type="project" value="GO_Central"/>
</dbReference>
<dbReference type="GO" id="GO:1903692">
    <property type="term" value="P:methionine import across plasma membrane"/>
    <property type="evidence" value="ECO:0000318"/>
    <property type="project" value="GO_Central"/>
</dbReference>
<dbReference type="GO" id="GO:0015821">
    <property type="term" value="P:methionine transport"/>
    <property type="evidence" value="ECO:0000269"/>
    <property type="project" value="EcoCyc"/>
</dbReference>
<dbReference type="CDD" id="cd13598">
    <property type="entry name" value="PBP2_lipoprotein_IlpA_like"/>
    <property type="match status" value="1"/>
</dbReference>
<dbReference type="FunFam" id="3.40.190.10:FF:000016">
    <property type="entry name" value="Lipoprotein"/>
    <property type="match status" value="1"/>
</dbReference>
<dbReference type="Gene3D" id="3.40.190.10">
    <property type="entry name" value="Periplasmic binding protein-like II"/>
    <property type="match status" value="2"/>
</dbReference>
<dbReference type="InterPro" id="IPR004872">
    <property type="entry name" value="Lipoprotein_NlpA"/>
</dbReference>
<dbReference type="NCBIfam" id="TIGR00363">
    <property type="entry name" value="MetQ/NlpA family lipoprotein"/>
    <property type="match status" value="1"/>
</dbReference>
<dbReference type="NCBIfam" id="NF007364">
    <property type="entry name" value="PRK09861.1"/>
    <property type="match status" value="1"/>
</dbReference>
<dbReference type="NCBIfam" id="NF008285">
    <property type="entry name" value="PRK11063.1"/>
    <property type="match status" value="1"/>
</dbReference>
<dbReference type="PANTHER" id="PTHR30429">
    <property type="entry name" value="D-METHIONINE-BINDING LIPOPROTEIN METQ"/>
    <property type="match status" value="1"/>
</dbReference>
<dbReference type="PANTHER" id="PTHR30429:SF1">
    <property type="entry name" value="D-METHIONINE-BINDING LIPOPROTEIN METQ-RELATED"/>
    <property type="match status" value="1"/>
</dbReference>
<dbReference type="Pfam" id="PF03180">
    <property type="entry name" value="Lipoprotein_9"/>
    <property type="match status" value="1"/>
</dbReference>
<dbReference type="PIRSF" id="PIRSF002854">
    <property type="entry name" value="MetQ"/>
    <property type="match status" value="1"/>
</dbReference>
<dbReference type="SUPFAM" id="SSF53850">
    <property type="entry name" value="Periplasmic binding protein-like II"/>
    <property type="match status" value="1"/>
</dbReference>
<dbReference type="PROSITE" id="PS51257">
    <property type="entry name" value="PROKAR_LIPOPROTEIN"/>
    <property type="match status" value="1"/>
</dbReference>